<evidence type="ECO:0000269" key="1">
    <source>
    </source>
</evidence>
<evidence type="ECO:0000269" key="2">
    <source>
    </source>
</evidence>
<evidence type="ECO:0000269" key="3">
    <source>
    </source>
</evidence>
<feature type="chain" id="PRO_0000297649" description="Chronic lymphocytic leukemia up-regulated protein 1">
    <location>
        <begin position="1"/>
        <end position="121"/>
    </location>
</feature>
<feature type="sequence variant" id="VAR_034663" description="In dbSNP:rs12580153.">
    <original>S</original>
    <variation>F</variation>
    <location>
        <position position="9"/>
    </location>
</feature>
<accession>Q5K131</accession>
<proteinExistence type="evidence at transcript level"/>
<dbReference type="EMBL" id="AJ845165">
    <property type="protein sequence ID" value="CAH61080.1"/>
    <property type="molecule type" value="mRNA"/>
</dbReference>
<dbReference type="EMBL" id="AJ845166">
    <property type="protein sequence ID" value="CAH61081.1"/>
    <property type="molecule type" value="mRNA"/>
</dbReference>
<dbReference type="BioMuta" id="CLLU1"/>
<dbReference type="PaxDb" id="9606-ENSP00000367746"/>
<dbReference type="UCSC" id="uc001tcf.3">
    <property type="organism name" value="human"/>
</dbReference>
<dbReference type="AGR" id="HGNC:29841"/>
<dbReference type="GeneCards" id="CLLU1"/>
<dbReference type="HGNC" id="HGNC:29841">
    <property type="gene designation" value="CLLU1"/>
</dbReference>
<dbReference type="MIM" id="616988">
    <property type="type" value="gene"/>
</dbReference>
<dbReference type="neXtProt" id="NX_Q5K131"/>
<dbReference type="HOGENOM" id="CLU_2037263_0_0_1"/>
<dbReference type="InParanoid" id="Q5K131"/>
<dbReference type="PAN-GO" id="Q5K131">
    <property type="GO annotations" value="0 GO annotations based on evolutionary models"/>
</dbReference>
<dbReference type="Pharos" id="Q5K131">
    <property type="development level" value="Tbio"/>
</dbReference>
<dbReference type="PRO" id="PR:Q5K131"/>
<dbReference type="Proteomes" id="UP000005640">
    <property type="component" value="Unplaced"/>
</dbReference>
<dbReference type="RNAct" id="Q5K131">
    <property type="molecule type" value="protein"/>
</dbReference>
<dbReference type="GO" id="GO:0005737">
    <property type="term" value="C:cytoplasm"/>
    <property type="evidence" value="ECO:0007669"/>
    <property type="project" value="UniProtKB-SubCell"/>
</dbReference>
<reference key="1">
    <citation type="journal article" date="2006" name="Blood">
        <title>Identification of a gene on chromosome 12q22 uniquely overexpressed in chronic lymphocytic leukemia.</title>
        <authorList>
            <person name="Buhl A.M."/>
            <person name="Jurlander J."/>
            <person name="Joergensen F.S."/>
            <person name="Ottesen A.M."/>
            <person name="Cowland J.B."/>
            <person name="Gjerdrum L.M."/>
            <person name="Hansen B.V."/>
            <person name="Leffers H."/>
        </authorList>
    </citation>
    <scope>NUCLEOTIDE SEQUENCE [MRNA]</scope>
    <scope>TISSUE SPECIFICITY</scope>
    <source>
        <tissue>Blood</tissue>
    </source>
</reference>
<reference key="2">
    <citation type="journal article" date="2007" name="Blood">
        <title>CLLU1 expression analysis adds prognostic information to risk prediction in chronic lymphocytic leukemia.</title>
        <authorList>
            <person name="Josefsson P."/>
            <person name="Geisler C.H."/>
            <person name="Leffers H."/>
            <person name="Petersen J.H."/>
            <person name="Andersen M.K."/>
            <person name="Jurlander J."/>
            <person name="Buhl A.M."/>
        </authorList>
    </citation>
    <scope>TISSUE SPECIFICITY</scope>
</reference>
<reference key="3">
    <citation type="journal article" date="2009" name="Genome Res.">
        <title>Recent de novo origin of human protein-coding genes.</title>
        <authorList>
            <person name="Knowles D.G."/>
            <person name="McLysaght A."/>
        </authorList>
    </citation>
    <scope>IDENTIFICATION</scope>
</reference>
<reference key="4">
    <citation type="journal article" date="2009" name="Leukemia">
        <title>The CLLU1 expression level is a stable and inherent feature of the chronic lymphocytic leukemia clone.</title>
        <authorList>
            <person name="Buhl A.M."/>
            <person name="Novotny G.W."/>
            <person name="Josefsson P."/>
            <person name="Nielsen J.E."/>
            <person name="Pedersen L.B."/>
            <person name="Geisler C."/>
            <person name="Rassenti L.Z."/>
            <person name="Kipps T.J."/>
            <person name="Jurlander J."/>
            <person name="Leffers H."/>
        </authorList>
    </citation>
    <scope>SUBCELLULAR LOCATION</scope>
    <scope>TISSUE SPECIFICITY</scope>
</reference>
<name>CLLU1_HUMAN</name>
<sequence>MFNKCSFHSSIYRPAADNSASSLCAIICFLNLVIECDLETNSEINKLIIYLFSQNNRIRFSKLLLKILFYISIFSYPELMCEQYVTFIKPGIHYGQVSKKHIIYSTFLSKNFKFQLLRVCW</sequence>
<gene>
    <name type="primary">CLLU1</name>
</gene>
<organism>
    <name type="scientific">Homo sapiens</name>
    <name type="common">Human</name>
    <dbReference type="NCBI Taxonomy" id="9606"/>
    <lineage>
        <taxon>Eukaryota</taxon>
        <taxon>Metazoa</taxon>
        <taxon>Chordata</taxon>
        <taxon>Craniata</taxon>
        <taxon>Vertebrata</taxon>
        <taxon>Euteleostomi</taxon>
        <taxon>Mammalia</taxon>
        <taxon>Eutheria</taxon>
        <taxon>Euarchontoglires</taxon>
        <taxon>Primates</taxon>
        <taxon>Haplorrhini</taxon>
        <taxon>Catarrhini</taxon>
        <taxon>Hominidae</taxon>
        <taxon>Homo</taxon>
    </lineage>
</organism>
<comment type="subcellular location">
    <subcellularLocation>
        <location evidence="3">Cytoplasm</location>
    </subcellularLocation>
    <text>Detected in the cytoplasm of chronic lymphocytic leukemia (CLL) cells.</text>
</comment>
<comment type="tissue specificity">
    <text evidence="1 2 3">Specifically expressed in chronic lymphocytic leukemia (CLL) cells from patients without immunoglobulin heavy-chain hypermutations. Expression is detected in all CLL cells and levels are similar in patients before and after treatment.</text>
</comment>
<comment type="miscellaneous">
    <text>Tridimensional modeling predicts that it may interact with the IL-4 receptor.</text>
</comment>
<comment type="miscellaneous">
    <text>This protein has no orthologs in other species and appears to be the product of a protein-coding gene which has arisen since divergence from chimp.</text>
</comment>
<keyword id="KW-0963">Cytoplasm</keyword>
<keyword id="KW-1185">Reference proteome</keyword>
<protein>
    <recommendedName>
        <fullName>Chronic lymphocytic leukemia up-regulated protein 1</fullName>
    </recommendedName>
</protein>